<reference key="1">
    <citation type="journal article" date="2000" name="Nature">
        <title>Complete genome sequence of Pseudomonas aeruginosa PAO1, an opportunistic pathogen.</title>
        <authorList>
            <person name="Stover C.K."/>
            <person name="Pham X.-Q.T."/>
            <person name="Erwin A.L."/>
            <person name="Mizoguchi S.D."/>
            <person name="Warrener P."/>
            <person name="Hickey M.J."/>
            <person name="Brinkman F.S.L."/>
            <person name="Hufnagle W.O."/>
            <person name="Kowalik D.J."/>
            <person name="Lagrou M."/>
            <person name="Garber R.L."/>
            <person name="Goltry L."/>
            <person name="Tolentino E."/>
            <person name="Westbrock-Wadman S."/>
            <person name="Yuan Y."/>
            <person name="Brody L.L."/>
            <person name="Coulter S.N."/>
            <person name="Folger K.R."/>
            <person name="Kas A."/>
            <person name="Larbig K."/>
            <person name="Lim R.M."/>
            <person name="Smith K.A."/>
            <person name="Spencer D.H."/>
            <person name="Wong G.K.-S."/>
            <person name="Wu Z."/>
            <person name="Paulsen I.T."/>
            <person name="Reizer J."/>
            <person name="Saier M.H. Jr."/>
            <person name="Hancock R.E.W."/>
            <person name="Lory S."/>
            <person name="Olson M.V."/>
        </authorList>
    </citation>
    <scope>NUCLEOTIDE SEQUENCE [LARGE SCALE GENOMIC DNA]</scope>
    <source>
        <strain>ATCC 15692 / DSM 22644 / CIP 104116 / JCM 14847 / LMG 12228 / 1C / PRS 101 / PAO1</strain>
    </source>
</reference>
<reference key="2">
    <citation type="journal article" date="2010" name="J. Mol. Biol.">
        <title>A novel mechanism for azoreduction.</title>
        <authorList>
            <person name="Ryan A."/>
            <person name="Laurieri N."/>
            <person name="Westwood I."/>
            <person name="Wang C.J."/>
            <person name="Lowe E."/>
            <person name="Sim E."/>
        </authorList>
    </citation>
    <scope>FUNCTION</scope>
    <scope>CATALYTIC ACTIVITY</scope>
    <source>
        <strain>ATCC 15692 / DSM 22644 / CIP 104116 / JCM 14847 / LMG 12228 / 1C / PRS 101 / PAO1</strain>
    </source>
</reference>
<reference key="3">
    <citation type="journal article" date="2014" name="PLoS ONE">
        <title>Identification of NAD(P)H quinone oxidoreductase activity in azoreductases from P. aeruginosa: azoreductases and NAD(P)H quinone oxidoreductases belong to the same FMN-dependent superfamily of enzymes.</title>
        <authorList>
            <person name="Ryan A."/>
            <person name="Kaplan E."/>
            <person name="Nebel J.C."/>
            <person name="Polycarpou E."/>
            <person name="Crescente V."/>
            <person name="Lowe E."/>
            <person name="Preston G.M."/>
            <person name="Sim E."/>
        </authorList>
    </citation>
    <scope>FUNCTION</scope>
    <scope>CATALYTIC ACTIVITY</scope>
</reference>
<evidence type="ECO:0000255" key="1">
    <source>
        <dbReference type="HAMAP-Rule" id="MF_01216"/>
    </source>
</evidence>
<evidence type="ECO:0000269" key="2">
    <source>
    </source>
</evidence>
<evidence type="ECO:0000269" key="3">
    <source>
    </source>
</evidence>
<evidence type="ECO:0000303" key="4">
    <source>
    </source>
</evidence>
<protein>
    <recommendedName>
        <fullName evidence="1">FMN-dependent NADH:quinone oxidoreductase 2</fullName>
        <ecNumber evidence="1 3">1.6.5.-</ecNumber>
    </recommendedName>
    <alternativeName>
        <fullName evidence="1">Azo-dye reductase 2</fullName>
    </alternativeName>
    <alternativeName>
        <fullName evidence="1">FMN-dependent NADH-azo compound oxidoreductase 2</fullName>
    </alternativeName>
    <alternativeName>
        <fullName evidence="1">FMN-dependent NADH-azoreductase 2</fullName>
        <ecNumber evidence="1 2">1.7.1.17</ecNumber>
    </alternativeName>
</protein>
<organism>
    <name type="scientific">Pseudomonas aeruginosa (strain ATCC 15692 / DSM 22644 / CIP 104116 / JCM 14847 / LMG 12228 / 1C / PRS 101 / PAO1)</name>
    <dbReference type="NCBI Taxonomy" id="208964"/>
    <lineage>
        <taxon>Bacteria</taxon>
        <taxon>Pseudomonadati</taxon>
        <taxon>Pseudomonadota</taxon>
        <taxon>Gammaproteobacteria</taxon>
        <taxon>Pseudomonadales</taxon>
        <taxon>Pseudomonadaceae</taxon>
        <taxon>Pseudomonas</taxon>
    </lineage>
</organism>
<proteinExistence type="evidence at protein level"/>
<name>AZOR2_PSEAE</name>
<accession>Q9I2E2</accession>
<feature type="chain" id="PRO_0000166348" description="FMN-dependent NADH:quinone oxidoreductase 2">
    <location>
        <begin position="1"/>
        <end position="202"/>
    </location>
</feature>
<feature type="binding site" evidence="1">
    <location>
        <position position="9"/>
    </location>
    <ligand>
        <name>FMN</name>
        <dbReference type="ChEBI" id="CHEBI:58210"/>
    </ligand>
</feature>
<feature type="binding site" evidence="1">
    <location>
        <begin position="15"/>
        <end position="17"/>
    </location>
    <ligand>
        <name>FMN</name>
        <dbReference type="ChEBI" id="CHEBI:58210"/>
    </ligand>
</feature>
<feature type="binding site" evidence="1">
    <location>
        <begin position="95"/>
        <end position="98"/>
    </location>
    <ligand>
        <name>FMN</name>
        <dbReference type="ChEBI" id="CHEBI:58210"/>
    </ligand>
</feature>
<feature type="binding site" evidence="1">
    <location>
        <begin position="139"/>
        <end position="142"/>
    </location>
    <ligand>
        <name>FMN</name>
        <dbReference type="ChEBI" id="CHEBI:58210"/>
    </ligand>
</feature>
<dbReference type="EC" id="1.6.5.-" evidence="1 3"/>
<dbReference type="EC" id="1.7.1.17" evidence="1 2"/>
<dbReference type="EMBL" id="AE004091">
    <property type="protein sequence ID" value="AAG05350.1"/>
    <property type="molecule type" value="Genomic_DNA"/>
</dbReference>
<dbReference type="PIR" id="A83402">
    <property type="entry name" value="A83402"/>
</dbReference>
<dbReference type="RefSeq" id="NP_250652.1">
    <property type="nucleotide sequence ID" value="NC_002516.2"/>
</dbReference>
<dbReference type="RefSeq" id="WP_003113473.1">
    <property type="nucleotide sequence ID" value="NZ_QZGE01000030.1"/>
</dbReference>
<dbReference type="SMR" id="Q9I2E2"/>
<dbReference type="STRING" id="208964.PA1962"/>
<dbReference type="PaxDb" id="208964-PA1962"/>
<dbReference type="GeneID" id="877936"/>
<dbReference type="KEGG" id="pae:PA1962"/>
<dbReference type="PATRIC" id="fig|208964.12.peg.2045"/>
<dbReference type="PseudoCAP" id="PA1962"/>
<dbReference type="HOGENOM" id="CLU_088964_0_0_6"/>
<dbReference type="InParanoid" id="Q9I2E2"/>
<dbReference type="OrthoDB" id="9787136at2"/>
<dbReference type="PhylomeDB" id="Q9I2E2"/>
<dbReference type="BioCyc" id="PAER208964:G1FZ6-2000-MONOMER"/>
<dbReference type="Proteomes" id="UP000002438">
    <property type="component" value="Chromosome"/>
</dbReference>
<dbReference type="GO" id="GO:0009055">
    <property type="term" value="F:electron transfer activity"/>
    <property type="evidence" value="ECO:0007669"/>
    <property type="project" value="UniProtKB-UniRule"/>
</dbReference>
<dbReference type="GO" id="GO:0010181">
    <property type="term" value="F:FMN binding"/>
    <property type="evidence" value="ECO:0007669"/>
    <property type="project" value="UniProtKB-UniRule"/>
</dbReference>
<dbReference type="GO" id="GO:0016652">
    <property type="term" value="F:oxidoreductase activity, acting on NAD(P)H as acceptor"/>
    <property type="evidence" value="ECO:0007669"/>
    <property type="project" value="UniProtKB-UniRule"/>
</dbReference>
<dbReference type="GO" id="GO:0016655">
    <property type="term" value="F:oxidoreductase activity, acting on NAD(P)H, quinone or similar compound as acceptor"/>
    <property type="evidence" value="ECO:0000314"/>
    <property type="project" value="PseudoCAP"/>
</dbReference>
<dbReference type="FunFam" id="3.40.50.360:FF:000049">
    <property type="entry name" value="FMN-dependent NADH-azoreductase"/>
    <property type="match status" value="1"/>
</dbReference>
<dbReference type="Gene3D" id="3.40.50.360">
    <property type="match status" value="1"/>
</dbReference>
<dbReference type="HAMAP" id="MF_01216">
    <property type="entry name" value="Azoreductase_type1"/>
    <property type="match status" value="1"/>
</dbReference>
<dbReference type="InterPro" id="IPR003680">
    <property type="entry name" value="Flavodoxin_fold"/>
</dbReference>
<dbReference type="InterPro" id="IPR029039">
    <property type="entry name" value="Flavoprotein-like_sf"/>
</dbReference>
<dbReference type="InterPro" id="IPR050104">
    <property type="entry name" value="FMN-dep_NADH:Q_OxRdtase_AzoR1"/>
</dbReference>
<dbReference type="InterPro" id="IPR023048">
    <property type="entry name" value="NADH:quinone_OxRdtase_FMN_depd"/>
</dbReference>
<dbReference type="PANTHER" id="PTHR43741">
    <property type="entry name" value="FMN-DEPENDENT NADH-AZOREDUCTASE 1"/>
    <property type="match status" value="1"/>
</dbReference>
<dbReference type="PANTHER" id="PTHR43741:SF4">
    <property type="entry name" value="FMN-DEPENDENT NADH:QUINONE OXIDOREDUCTASE"/>
    <property type="match status" value="1"/>
</dbReference>
<dbReference type="Pfam" id="PF02525">
    <property type="entry name" value="Flavodoxin_2"/>
    <property type="match status" value="1"/>
</dbReference>
<dbReference type="SUPFAM" id="SSF52218">
    <property type="entry name" value="Flavoproteins"/>
    <property type="match status" value="1"/>
</dbReference>
<sequence length="202" mass="21290">MKLLHIDSSILGDASASRQLSAELVQAWRQNEDGLDVTYRDLAADAVAHFSALTLAAGSTPAELRDAALKHEVAVGEEVLEEFLAADVVVIGAPMYNFTISSQLKAWIDRIAVAGKTFRYTENGPVGLAGDKKVVIVSTAGGVHAGQPTGAAHEGYLRTVLGFFGITDIEVVRAEGLAYGEEPRTQAIAAARRQIAGQFAAA</sequence>
<gene>
    <name evidence="1 4" type="primary">azoR2</name>
    <name type="ordered locus">PA1962</name>
</gene>
<keyword id="KW-0285">Flavoprotein</keyword>
<keyword id="KW-0288">FMN</keyword>
<keyword id="KW-0520">NAD</keyword>
<keyword id="KW-0560">Oxidoreductase</keyword>
<keyword id="KW-1185">Reference proteome</keyword>
<comment type="function">
    <text evidence="3">Quinone reductase that provides resistance to thiol-specific stress caused by electrophilic quinones (PubMed:24915188). Reduces both benzoquinones and naphthoquinones efficiently (PubMed:24915188).</text>
</comment>
<comment type="function">
    <text evidence="2">Also exhibits azoreductase activity. Catalyzes the reductive cleavage of the azo bond in aromatic azo compounds to the corresponding amines (PubMed:20417637). Preferred substrates are the large bis-azo dye Ponceau BS, amaranth and tropaeolin O (PubMed:20417637).</text>
</comment>
<comment type="catalytic activity">
    <reaction evidence="1 3">
        <text>2 a quinone + NADH + H(+) = 2 a 1,4-benzosemiquinone + NAD(+)</text>
        <dbReference type="Rhea" id="RHEA:65952"/>
        <dbReference type="ChEBI" id="CHEBI:15378"/>
        <dbReference type="ChEBI" id="CHEBI:57540"/>
        <dbReference type="ChEBI" id="CHEBI:57945"/>
        <dbReference type="ChEBI" id="CHEBI:132124"/>
        <dbReference type="ChEBI" id="CHEBI:134225"/>
    </reaction>
    <physiologicalReaction direction="left-to-right" evidence="3">
        <dbReference type="Rhea" id="RHEA:65953"/>
    </physiologicalReaction>
</comment>
<comment type="catalytic activity">
    <reaction evidence="1 2">
        <text>N,N-dimethyl-1,4-phenylenediamine + anthranilate + 2 NAD(+) = 2-(4-dimethylaminophenyl)diazenylbenzoate + 2 NADH + 2 H(+)</text>
        <dbReference type="Rhea" id="RHEA:55872"/>
        <dbReference type="ChEBI" id="CHEBI:15378"/>
        <dbReference type="ChEBI" id="CHEBI:15783"/>
        <dbReference type="ChEBI" id="CHEBI:16567"/>
        <dbReference type="ChEBI" id="CHEBI:57540"/>
        <dbReference type="ChEBI" id="CHEBI:57945"/>
        <dbReference type="ChEBI" id="CHEBI:71579"/>
        <dbReference type="EC" id="1.7.1.17"/>
    </reaction>
    <physiologicalReaction direction="right-to-left" evidence="2">
        <dbReference type="Rhea" id="RHEA:55874"/>
    </physiologicalReaction>
</comment>
<comment type="cofactor">
    <cofactor evidence="1">
        <name>FMN</name>
        <dbReference type="ChEBI" id="CHEBI:58210"/>
    </cofactor>
    <text evidence="1">Binds 1 FMN per subunit.</text>
</comment>
<comment type="subunit">
    <text evidence="1">Homodimer.</text>
</comment>
<comment type="miscellaneous">
    <text evidence="3">Rate of quinone reduction is higher than reduction of azo substrates, suggesting the enzyme is better suited for carrying out quinone rather than azo reduction.</text>
</comment>
<comment type="similarity">
    <text evidence="1">Belongs to the azoreductase type 1 family.</text>
</comment>